<gene>
    <name type="primary">glyQ</name>
    <name type="ordered locus">XF_1960</name>
</gene>
<accession>Q9PC25</accession>
<reference key="1">
    <citation type="journal article" date="2000" name="Nature">
        <title>The genome sequence of the plant pathogen Xylella fastidiosa.</title>
        <authorList>
            <person name="Simpson A.J.G."/>
            <person name="Reinach F.C."/>
            <person name="Arruda P."/>
            <person name="Abreu F.A."/>
            <person name="Acencio M."/>
            <person name="Alvarenga R."/>
            <person name="Alves L.M.C."/>
            <person name="Araya J.E."/>
            <person name="Baia G.S."/>
            <person name="Baptista C.S."/>
            <person name="Barros M.H."/>
            <person name="Bonaccorsi E.D."/>
            <person name="Bordin S."/>
            <person name="Bove J.M."/>
            <person name="Briones M.R.S."/>
            <person name="Bueno M.R.P."/>
            <person name="Camargo A.A."/>
            <person name="Camargo L.E.A."/>
            <person name="Carraro D.M."/>
            <person name="Carrer H."/>
            <person name="Colauto N.B."/>
            <person name="Colombo C."/>
            <person name="Costa F.F."/>
            <person name="Costa M.C.R."/>
            <person name="Costa-Neto C.M."/>
            <person name="Coutinho L.L."/>
            <person name="Cristofani M."/>
            <person name="Dias-Neto E."/>
            <person name="Docena C."/>
            <person name="El-Dorry H."/>
            <person name="Facincani A.P."/>
            <person name="Ferreira A.J.S."/>
            <person name="Ferreira V.C.A."/>
            <person name="Ferro J.A."/>
            <person name="Fraga J.S."/>
            <person name="Franca S.C."/>
            <person name="Franco M.C."/>
            <person name="Frohme M."/>
            <person name="Furlan L.R."/>
            <person name="Garnier M."/>
            <person name="Goldman G.H."/>
            <person name="Goldman M.H.S."/>
            <person name="Gomes S.L."/>
            <person name="Gruber A."/>
            <person name="Ho P.L."/>
            <person name="Hoheisel J.D."/>
            <person name="Junqueira M.L."/>
            <person name="Kemper E.L."/>
            <person name="Kitajima J.P."/>
            <person name="Krieger J.E."/>
            <person name="Kuramae E.E."/>
            <person name="Laigret F."/>
            <person name="Lambais M.R."/>
            <person name="Leite L.C.C."/>
            <person name="Lemos E.G.M."/>
            <person name="Lemos M.V.F."/>
            <person name="Lopes S.A."/>
            <person name="Lopes C.R."/>
            <person name="Machado J.A."/>
            <person name="Machado M.A."/>
            <person name="Madeira A.M.B.N."/>
            <person name="Madeira H.M.F."/>
            <person name="Marino C.L."/>
            <person name="Marques M.V."/>
            <person name="Martins E.A.L."/>
            <person name="Martins E.M.F."/>
            <person name="Matsukuma A.Y."/>
            <person name="Menck C.F.M."/>
            <person name="Miracca E.C."/>
            <person name="Miyaki C.Y."/>
            <person name="Monteiro-Vitorello C.B."/>
            <person name="Moon D.H."/>
            <person name="Nagai M.A."/>
            <person name="Nascimento A.L.T.O."/>
            <person name="Netto L.E.S."/>
            <person name="Nhani A. Jr."/>
            <person name="Nobrega F.G."/>
            <person name="Nunes L.R."/>
            <person name="Oliveira M.A."/>
            <person name="de Oliveira M.C."/>
            <person name="de Oliveira R.C."/>
            <person name="Palmieri D.A."/>
            <person name="Paris A."/>
            <person name="Peixoto B.R."/>
            <person name="Pereira G.A.G."/>
            <person name="Pereira H.A. Jr."/>
            <person name="Pesquero J.B."/>
            <person name="Quaggio R.B."/>
            <person name="Roberto P.G."/>
            <person name="Rodrigues V."/>
            <person name="de Rosa A.J.M."/>
            <person name="de Rosa V.E. Jr."/>
            <person name="de Sa R.G."/>
            <person name="Santelli R.V."/>
            <person name="Sawasaki H.E."/>
            <person name="da Silva A.C.R."/>
            <person name="da Silva A.M."/>
            <person name="da Silva F.R."/>
            <person name="Silva W.A. Jr."/>
            <person name="da Silveira J.F."/>
            <person name="Silvestri M.L.Z."/>
            <person name="Siqueira W.J."/>
            <person name="de Souza A.A."/>
            <person name="de Souza A.P."/>
            <person name="Terenzi M.F."/>
            <person name="Truffi D."/>
            <person name="Tsai S.M."/>
            <person name="Tsuhako M.H."/>
            <person name="Vallada H."/>
            <person name="Van Sluys M.A."/>
            <person name="Verjovski-Almeida S."/>
            <person name="Vettore A.L."/>
            <person name="Zago M.A."/>
            <person name="Zatz M."/>
            <person name="Meidanis J."/>
            <person name="Setubal J.C."/>
        </authorList>
    </citation>
    <scope>NUCLEOTIDE SEQUENCE [LARGE SCALE GENOMIC DNA]</scope>
    <source>
        <strain>9a5c</strain>
    </source>
</reference>
<dbReference type="EC" id="6.1.1.14"/>
<dbReference type="EMBL" id="AE003849">
    <property type="protein sequence ID" value="AAF84762.1"/>
    <property type="molecule type" value="Genomic_DNA"/>
</dbReference>
<dbReference type="PIR" id="B82617">
    <property type="entry name" value="B82617"/>
</dbReference>
<dbReference type="RefSeq" id="WP_010894419.1">
    <property type="nucleotide sequence ID" value="NC_002488.3"/>
</dbReference>
<dbReference type="SMR" id="Q9PC25"/>
<dbReference type="STRING" id="160492.XF_1960"/>
<dbReference type="KEGG" id="xfa:XF_1960"/>
<dbReference type="eggNOG" id="COG0752">
    <property type="taxonomic scope" value="Bacteria"/>
</dbReference>
<dbReference type="HOGENOM" id="CLU_057066_1_0_6"/>
<dbReference type="Proteomes" id="UP000000812">
    <property type="component" value="Chromosome"/>
</dbReference>
<dbReference type="GO" id="GO:0005829">
    <property type="term" value="C:cytosol"/>
    <property type="evidence" value="ECO:0007669"/>
    <property type="project" value="TreeGrafter"/>
</dbReference>
<dbReference type="GO" id="GO:0005524">
    <property type="term" value="F:ATP binding"/>
    <property type="evidence" value="ECO:0007669"/>
    <property type="project" value="UniProtKB-UniRule"/>
</dbReference>
<dbReference type="GO" id="GO:0004820">
    <property type="term" value="F:glycine-tRNA ligase activity"/>
    <property type="evidence" value="ECO:0007669"/>
    <property type="project" value="UniProtKB-UniRule"/>
</dbReference>
<dbReference type="GO" id="GO:0006426">
    <property type="term" value="P:glycyl-tRNA aminoacylation"/>
    <property type="evidence" value="ECO:0007669"/>
    <property type="project" value="UniProtKB-UniRule"/>
</dbReference>
<dbReference type="CDD" id="cd00733">
    <property type="entry name" value="GlyRS_alpha_core"/>
    <property type="match status" value="1"/>
</dbReference>
<dbReference type="FunFam" id="3.30.930.10:FF:000006">
    <property type="entry name" value="Glycine--tRNA ligase alpha subunit"/>
    <property type="match status" value="1"/>
</dbReference>
<dbReference type="Gene3D" id="3.30.930.10">
    <property type="entry name" value="Bira Bifunctional Protein, Domain 2"/>
    <property type="match status" value="1"/>
</dbReference>
<dbReference type="Gene3D" id="1.20.58.180">
    <property type="entry name" value="Class II aaRS and biotin synthetases, domain 2"/>
    <property type="match status" value="1"/>
</dbReference>
<dbReference type="HAMAP" id="MF_00254">
    <property type="entry name" value="Gly_tRNA_synth_alpha"/>
    <property type="match status" value="1"/>
</dbReference>
<dbReference type="InterPro" id="IPR045864">
    <property type="entry name" value="aa-tRNA-synth_II/BPL/LPL"/>
</dbReference>
<dbReference type="InterPro" id="IPR006194">
    <property type="entry name" value="Gly-tRNA-synth_heterodimer"/>
</dbReference>
<dbReference type="InterPro" id="IPR002310">
    <property type="entry name" value="Gly-tRNA_ligase_asu"/>
</dbReference>
<dbReference type="NCBIfam" id="TIGR00388">
    <property type="entry name" value="glyQ"/>
    <property type="match status" value="1"/>
</dbReference>
<dbReference type="NCBIfam" id="NF006827">
    <property type="entry name" value="PRK09348.1"/>
    <property type="match status" value="1"/>
</dbReference>
<dbReference type="PANTHER" id="PTHR30075:SF2">
    <property type="entry name" value="GLYCINE--TRNA LIGASE, CHLOROPLASTIC_MITOCHONDRIAL 2"/>
    <property type="match status" value="1"/>
</dbReference>
<dbReference type="PANTHER" id="PTHR30075">
    <property type="entry name" value="GLYCYL-TRNA SYNTHETASE"/>
    <property type="match status" value="1"/>
</dbReference>
<dbReference type="Pfam" id="PF02091">
    <property type="entry name" value="tRNA-synt_2e"/>
    <property type="match status" value="1"/>
</dbReference>
<dbReference type="PRINTS" id="PR01044">
    <property type="entry name" value="TRNASYNTHGA"/>
</dbReference>
<dbReference type="SUPFAM" id="SSF55681">
    <property type="entry name" value="Class II aaRS and biotin synthetases"/>
    <property type="match status" value="1"/>
</dbReference>
<dbReference type="PROSITE" id="PS50861">
    <property type="entry name" value="AA_TRNA_LIGASE_II_GLYAB"/>
    <property type="match status" value="1"/>
</dbReference>
<protein>
    <recommendedName>
        <fullName>Glycine--tRNA ligase alpha subunit</fullName>
        <ecNumber>6.1.1.14</ecNumber>
    </recommendedName>
    <alternativeName>
        <fullName>Glycyl-tRNA synthetase alpha subunit</fullName>
        <shortName>GlyRS</shortName>
    </alternativeName>
</protein>
<name>SYGA_XYLFA</name>
<organism>
    <name type="scientific">Xylella fastidiosa (strain 9a5c)</name>
    <dbReference type="NCBI Taxonomy" id="160492"/>
    <lineage>
        <taxon>Bacteria</taxon>
        <taxon>Pseudomonadati</taxon>
        <taxon>Pseudomonadota</taxon>
        <taxon>Gammaproteobacteria</taxon>
        <taxon>Lysobacterales</taxon>
        <taxon>Lysobacteraceae</taxon>
        <taxon>Xylella</taxon>
    </lineage>
</organism>
<keyword id="KW-0030">Aminoacyl-tRNA synthetase</keyword>
<keyword id="KW-0067">ATP-binding</keyword>
<keyword id="KW-0963">Cytoplasm</keyword>
<keyword id="KW-0436">Ligase</keyword>
<keyword id="KW-0547">Nucleotide-binding</keyword>
<keyword id="KW-0648">Protein biosynthesis</keyword>
<proteinExistence type="inferred from homology"/>
<comment type="catalytic activity">
    <reaction>
        <text>tRNA(Gly) + glycine + ATP = glycyl-tRNA(Gly) + AMP + diphosphate</text>
        <dbReference type="Rhea" id="RHEA:16013"/>
        <dbReference type="Rhea" id="RHEA-COMP:9664"/>
        <dbReference type="Rhea" id="RHEA-COMP:9683"/>
        <dbReference type="ChEBI" id="CHEBI:30616"/>
        <dbReference type="ChEBI" id="CHEBI:33019"/>
        <dbReference type="ChEBI" id="CHEBI:57305"/>
        <dbReference type="ChEBI" id="CHEBI:78442"/>
        <dbReference type="ChEBI" id="CHEBI:78522"/>
        <dbReference type="ChEBI" id="CHEBI:456215"/>
        <dbReference type="EC" id="6.1.1.14"/>
    </reaction>
</comment>
<comment type="subunit">
    <text evidence="1">Tetramer of two alpha and two beta subunits.</text>
</comment>
<comment type="subcellular location">
    <subcellularLocation>
        <location evidence="1">Cytoplasm</location>
    </subcellularLocation>
</comment>
<comment type="similarity">
    <text evidence="2">Belongs to the class-II aminoacyl-tRNA synthetase family.</text>
</comment>
<sequence length="307" mass="35057">MSDSRGVLSISTSTTFQGLIHTLNRYWAEQGCVLVQPLDLEVGAGTFHPATFLRALGPEPWNAAYVQPSRRPTDGRYGENPNRLQRYYQYQVAMKPNPDNLQELYLASLQALGIDPLVHDVRFVEDNWESPTLGAWGLGWEVWLNGMEVTQFTYFQQAGGLECKPVLGEVTYGLERLCMYLQSCDNVYDLVWTYGPDGTPVTYGDVYHQNEVEQSAYNFEHANVTELLHTFDACEREAKALVEAVLPLPAYEKVIKASHCFNLLDARRTISVTERQRYILRIRTLSQEVAKAYYAQREKLGFPNLRR</sequence>
<feature type="chain" id="PRO_0000072885" description="Glycine--tRNA ligase alpha subunit">
    <location>
        <begin position="1"/>
        <end position="307"/>
    </location>
</feature>
<evidence type="ECO:0000250" key="1"/>
<evidence type="ECO:0000305" key="2"/>